<dbReference type="EC" id="6.3.2.4" evidence="2"/>
<dbReference type="EMBL" id="CP000951">
    <property type="protein sequence ID" value="ACA99575.1"/>
    <property type="molecule type" value="Genomic_DNA"/>
</dbReference>
<dbReference type="RefSeq" id="WP_012307198.1">
    <property type="nucleotide sequence ID" value="NZ_JAHHPU010000002.1"/>
</dbReference>
<dbReference type="SMR" id="B1XNQ0"/>
<dbReference type="STRING" id="32049.SYNPCC7002_A1584"/>
<dbReference type="KEGG" id="syp:SYNPCC7002_A1584"/>
<dbReference type="eggNOG" id="COG1181">
    <property type="taxonomic scope" value="Bacteria"/>
</dbReference>
<dbReference type="HOGENOM" id="CLU_039268_0_0_3"/>
<dbReference type="UniPathway" id="UPA00219"/>
<dbReference type="Proteomes" id="UP000001688">
    <property type="component" value="Chromosome"/>
</dbReference>
<dbReference type="GO" id="GO:0005829">
    <property type="term" value="C:cytosol"/>
    <property type="evidence" value="ECO:0007669"/>
    <property type="project" value="TreeGrafter"/>
</dbReference>
<dbReference type="GO" id="GO:0005524">
    <property type="term" value="F:ATP binding"/>
    <property type="evidence" value="ECO:0007669"/>
    <property type="project" value="UniProtKB-KW"/>
</dbReference>
<dbReference type="GO" id="GO:0008716">
    <property type="term" value="F:D-alanine-D-alanine ligase activity"/>
    <property type="evidence" value="ECO:0007669"/>
    <property type="project" value="UniProtKB-UniRule"/>
</dbReference>
<dbReference type="GO" id="GO:0046872">
    <property type="term" value="F:metal ion binding"/>
    <property type="evidence" value="ECO:0007669"/>
    <property type="project" value="UniProtKB-KW"/>
</dbReference>
<dbReference type="GO" id="GO:0071555">
    <property type="term" value="P:cell wall organization"/>
    <property type="evidence" value="ECO:0007669"/>
    <property type="project" value="UniProtKB-KW"/>
</dbReference>
<dbReference type="GO" id="GO:0009252">
    <property type="term" value="P:peptidoglycan biosynthetic process"/>
    <property type="evidence" value="ECO:0007669"/>
    <property type="project" value="UniProtKB-UniRule"/>
</dbReference>
<dbReference type="GO" id="GO:0008360">
    <property type="term" value="P:regulation of cell shape"/>
    <property type="evidence" value="ECO:0007669"/>
    <property type="project" value="UniProtKB-KW"/>
</dbReference>
<dbReference type="FunFam" id="3.30.1490.20:FF:000007">
    <property type="entry name" value="D-alanine--D-alanine ligase"/>
    <property type="match status" value="1"/>
</dbReference>
<dbReference type="FunFam" id="3.30.470.20:FF:000008">
    <property type="entry name" value="D-alanine--D-alanine ligase"/>
    <property type="match status" value="1"/>
</dbReference>
<dbReference type="Gene3D" id="3.40.50.20">
    <property type="match status" value="1"/>
</dbReference>
<dbReference type="Gene3D" id="3.30.1490.20">
    <property type="entry name" value="ATP-grasp fold, A domain"/>
    <property type="match status" value="1"/>
</dbReference>
<dbReference type="Gene3D" id="3.30.470.20">
    <property type="entry name" value="ATP-grasp fold, B domain"/>
    <property type="match status" value="1"/>
</dbReference>
<dbReference type="HAMAP" id="MF_00047">
    <property type="entry name" value="Dala_Dala_lig"/>
    <property type="match status" value="1"/>
</dbReference>
<dbReference type="InterPro" id="IPR011761">
    <property type="entry name" value="ATP-grasp"/>
</dbReference>
<dbReference type="InterPro" id="IPR013815">
    <property type="entry name" value="ATP_grasp_subdomain_1"/>
</dbReference>
<dbReference type="InterPro" id="IPR000291">
    <property type="entry name" value="D-Ala_lig_Van_CS"/>
</dbReference>
<dbReference type="InterPro" id="IPR005905">
    <property type="entry name" value="D_ala_D_ala"/>
</dbReference>
<dbReference type="InterPro" id="IPR011095">
    <property type="entry name" value="Dala_Dala_lig_C"/>
</dbReference>
<dbReference type="InterPro" id="IPR011127">
    <property type="entry name" value="Dala_Dala_lig_N"/>
</dbReference>
<dbReference type="InterPro" id="IPR016185">
    <property type="entry name" value="PreATP-grasp_dom_sf"/>
</dbReference>
<dbReference type="NCBIfam" id="TIGR01205">
    <property type="entry name" value="D_ala_D_alaTIGR"/>
    <property type="match status" value="1"/>
</dbReference>
<dbReference type="NCBIfam" id="NF002528">
    <property type="entry name" value="PRK01966.1-4"/>
    <property type="match status" value="1"/>
</dbReference>
<dbReference type="PANTHER" id="PTHR23132">
    <property type="entry name" value="D-ALANINE--D-ALANINE LIGASE"/>
    <property type="match status" value="1"/>
</dbReference>
<dbReference type="PANTHER" id="PTHR23132:SF25">
    <property type="entry name" value="D-ALANINE--D-ALANINE LIGASE A"/>
    <property type="match status" value="1"/>
</dbReference>
<dbReference type="Pfam" id="PF07478">
    <property type="entry name" value="Dala_Dala_lig_C"/>
    <property type="match status" value="1"/>
</dbReference>
<dbReference type="Pfam" id="PF01820">
    <property type="entry name" value="Dala_Dala_lig_N"/>
    <property type="match status" value="1"/>
</dbReference>
<dbReference type="PIRSF" id="PIRSF039102">
    <property type="entry name" value="Ddl/VanB"/>
    <property type="match status" value="1"/>
</dbReference>
<dbReference type="SUPFAM" id="SSF56059">
    <property type="entry name" value="Glutathione synthetase ATP-binding domain-like"/>
    <property type="match status" value="1"/>
</dbReference>
<dbReference type="SUPFAM" id="SSF52440">
    <property type="entry name" value="PreATP-grasp domain"/>
    <property type="match status" value="1"/>
</dbReference>
<dbReference type="PROSITE" id="PS50975">
    <property type="entry name" value="ATP_GRASP"/>
    <property type="match status" value="1"/>
</dbReference>
<dbReference type="PROSITE" id="PS00843">
    <property type="entry name" value="DALA_DALA_LIGASE_1"/>
    <property type="match status" value="1"/>
</dbReference>
<dbReference type="PROSITE" id="PS00844">
    <property type="entry name" value="DALA_DALA_LIGASE_2"/>
    <property type="match status" value="1"/>
</dbReference>
<evidence type="ECO:0000250" key="1"/>
<evidence type="ECO:0000255" key="2">
    <source>
        <dbReference type="HAMAP-Rule" id="MF_00047"/>
    </source>
</evidence>
<name>DDL_PICP2</name>
<keyword id="KW-0067">ATP-binding</keyword>
<keyword id="KW-0133">Cell shape</keyword>
<keyword id="KW-0961">Cell wall biogenesis/degradation</keyword>
<keyword id="KW-0963">Cytoplasm</keyword>
<keyword id="KW-0436">Ligase</keyword>
<keyword id="KW-0460">Magnesium</keyword>
<keyword id="KW-0464">Manganese</keyword>
<keyword id="KW-0479">Metal-binding</keyword>
<keyword id="KW-0547">Nucleotide-binding</keyword>
<keyword id="KW-0573">Peptidoglycan synthesis</keyword>
<keyword id="KW-1185">Reference proteome</keyword>
<feature type="chain" id="PRO_0000341180" description="D-alanine--D-alanine ligase">
    <location>
        <begin position="1"/>
        <end position="353"/>
    </location>
</feature>
<feature type="domain" description="ATP-grasp" evidence="2">
    <location>
        <begin position="135"/>
        <end position="344"/>
    </location>
</feature>
<feature type="binding site" evidence="2">
    <location>
        <begin position="171"/>
        <end position="226"/>
    </location>
    <ligand>
        <name>ATP</name>
        <dbReference type="ChEBI" id="CHEBI:30616"/>
    </ligand>
</feature>
<feature type="binding site" evidence="2">
    <location>
        <position position="297"/>
    </location>
    <ligand>
        <name>Mg(2+)</name>
        <dbReference type="ChEBI" id="CHEBI:18420"/>
        <label>1</label>
    </ligand>
</feature>
<feature type="binding site" evidence="2">
    <location>
        <position position="311"/>
    </location>
    <ligand>
        <name>Mg(2+)</name>
        <dbReference type="ChEBI" id="CHEBI:18420"/>
        <label>1</label>
    </ligand>
</feature>
<feature type="binding site" evidence="2">
    <location>
        <position position="311"/>
    </location>
    <ligand>
        <name>Mg(2+)</name>
        <dbReference type="ChEBI" id="CHEBI:18420"/>
        <label>2</label>
    </ligand>
</feature>
<feature type="binding site" evidence="2">
    <location>
        <position position="313"/>
    </location>
    <ligand>
        <name>Mg(2+)</name>
        <dbReference type="ChEBI" id="CHEBI:18420"/>
        <label>2</label>
    </ligand>
</feature>
<reference key="1">
    <citation type="submission" date="2008-02" db="EMBL/GenBank/DDBJ databases">
        <title>Complete sequence of Synechococcus sp. PCC 7002.</title>
        <authorList>
            <person name="Li T."/>
            <person name="Zhao J."/>
            <person name="Zhao C."/>
            <person name="Liu Z."/>
            <person name="Zhao F."/>
            <person name="Marquardt J."/>
            <person name="Nomura C.T."/>
            <person name="Persson S."/>
            <person name="Detter J.C."/>
            <person name="Richardson P.M."/>
            <person name="Lanz C."/>
            <person name="Schuster S.C."/>
            <person name="Wang J."/>
            <person name="Li S."/>
            <person name="Huang X."/>
            <person name="Cai T."/>
            <person name="Yu Z."/>
            <person name="Luo J."/>
            <person name="Zhao J."/>
            <person name="Bryant D.A."/>
        </authorList>
    </citation>
    <scope>NUCLEOTIDE SEQUENCE [LARGE SCALE GENOMIC DNA]</scope>
    <source>
        <strain>ATCC 27264 / PCC 7002 / PR-6</strain>
    </source>
</reference>
<gene>
    <name evidence="2" type="primary">ddl</name>
    <name type="ordered locus">SYNPCC7002_A1584</name>
</gene>
<protein>
    <recommendedName>
        <fullName evidence="2">D-alanine--D-alanine ligase</fullName>
        <ecNumber evidence="2">6.3.2.4</ecNumber>
    </recommendedName>
    <alternativeName>
        <fullName evidence="2">D-Ala-D-Ala ligase</fullName>
    </alternativeName>
    <alternativeName>
        <fullName evidence="2">D-alanylalanine synthetase</fullName>
    </alternativeName>
</protein>
<comment type="function">
    <text evidence="2">Cell wall formation.</text>
</comment>
<comment type="catalytic activity">
    <reaction evidence="2">
        <text>2 D-alanine + ATP = D-alanyl-D-alanine + ADP + phosphate + H(+)</text>
        <dbReference type="Rhea" id="RHEA:11224"/>
        <dbReference type="ChEBI" id="CHEBI:15378"/>
        <dbReference type="ChEBI" id="CHEBI:30616"/>
        <dbReference type="ChEBI" id="CHEBI:43474"/>
        <dbReference type="ChEBI" id="CHEBI:57416"/>
        <dbReference type="ChEBI" id="CHEBI:57822"/>
        <dbReference type="ChEBI" id="CHEBI:456216"/>
        <dbReference type="EC" id="6.3.2.4"/>
    </reaction>
</comment>
<comment type="cofactor">
    <cofactor evidence="1">
        <name>Mg(2+)</name>
        <dbReference type="ChEBI" id="CHEBI:18420"/>
    </cofactor>
    <cofactor evidence="1">
        <name>Mn(2+)</name>
        <dbReference type="ChEBI" id="CHEBI:29035"/>
    </cofactor>
    <text evidence="1">Binds 2 magnesium or manganese ions per subunit.</text>
</comment>
<comment type="pathway">
    <text evidence="2">Cell wall biogenesis; peptidoglycan biosynthesis.</text>
</comment>
<comment type="subcellular location">
    <subcellularLocation>
        <location evidence="2">Cytoplasm</location>
    </subcellularLocation>
</comment>
<comment type="similarity">
    <text evidence="2">Belongs to the D-alanine--D-alanine ligase family.</text>
</comment>
<accession>B1XNQ0</accession>
<proteinExistence type="inferred from homology"/>
<sequence length="353" mass="38625">MARQRVGLLFGGKSGEHDVSIVSAAAIAKAFAQEDNPDKYELLPFYIDRNGIWHDPEISQQVLTAGKALPVETVDPASRWQFPPAAPSIDAWFPIVHGPNGEDGTLQGLLTLMEKPFVGSKVLGSAAGMDKLAMKMVFAQAGLAQVDYVGVLRSEVWSGPCVFPKVCDKIEAQLDYPMFVKPANLGSSVGISKVRTRDELEKALDLAAEYDRRLIVEAGVTAREVECAVLGNDQPKASVVGEIRFDSDFYDYETKYTDGKSSMHIPAEIPGAIAQQIQELAIKAFQALDCRGIARVDFFYVEATQTVLINEINTLPGFTALSMYPQLWQQSGVPFPQLVDRLVQFALEDVPQA</sequence>
<organism>
    <name type="scientific">Picosynechococcus sp. (strain ATCC 27264 / PCC 7002 / PR-6)</name>
    <name type="common">Agmenellum quadruplicatum</name>
    <dbReference type="NCBI Taxonomy" id="32049"/>
    <lineage>
        <taxon>Bacteria</taxon>
        <taxon>Bacillati</taxon>
        <taxon>Cyanobacteriota</taxon>
        <taxon>Cyanophyceae</taxon>
        <taxon>Oscillatoriophycideae</taxon>
        <taxon>Chroococcales</taxon>
        <taxon>Geminocystaceae</taxon>
        <taxon>Picosynechococcus</taxon>
    </lineage>
</organism>